<protein>
    <recommendedName>
        <fullName>Cysteine and histidine-rich domain-containing protein RAR1</fullName>
    </recommendedName>
    <alternativeName>
        <fullName>CHORD domain-containing protein RAR1</fullName>
    </alternativeName>
    <alternativeName>
        <fullName>OsRAR1</fullName>
    </alternativeName>
    <alternativeName>
        <fullName>Protein REQUIRED FOR MLA12 RESISTANCE 1</fullName>
    </alternativeName>
</protein>
<proteinExistence type="evidence at protein level"/>
<feature type="chain" id="PRO_0000403649" description="Cysteine and histidine-rich domain-containing protein RAR1">
    <location>
        <begin position="1"/>
        <end position="233"/>
    </location>
</feature>
<feature type="domain" description="CHORD 1" evidence="1">
    <location>
        <begin position="26"/>
        <end position="85"/>
    </location>
</feature>
<feature type="domain" description="CHORD 2" evidence="1">
    <location>
        <begin position="169"/>
        <end position="228"/>
    </location>
</feature>
<feature type="region of interest" description="Disordered" evidence="2">
    <location>
        <begin position="1"/>
        <end position="23"/>
    </location>
</feature>
<feature type="short sequence motif" description="CCCH">
    <location>
        <begin position="117"/>
        <end position="137"/>
    </location>
</feature>
<feature type="compositionally biased region" description="Low complexity" evidence="2">
    <location>
        <begin position="1"/>
        <end position="13"/>
    </location>
</feature>
<feature type="binding site" evidence="1">
    <location>
        <position position="26"/>
    </location>
    <ligand>
        <name>Zn(2+)</name>
        <dbReference type="ChEBI" id="CHEBI:29105"/>
        <label>1</label>
    </ligand>
</feature>
<feature type="binding site" evidence="1">
    <location>
        <position position="31"/>
    </location>
    <ligand>
        <name>Zn(2+)</name>
        <dbReference type="ChEBI" id="CHEBI:29105"/>
        <label>1</label>
    </ligand>
</feature>
<feature type="binding site" evidence="1">
    <location>
        <position position="45"/>
    </location>
    <ligand>
        <name>Zn(2+)</name>
        <dbReference type="ChEBI" id="CHEBI:29105"/>
        <label>1</label>
    </ligand>
</feature>
<feature type="binding site" evidence="1">
    <location>
        <position position="48"/>
    </location>
    <ligand>
        <name>Zn(2+)</name>
        <dbReference type="ChEBI" id="CHEBI:29105"/>
        <label>2</label>
    </ligand>
</feature>
<feature type="binding site" evidence="1">
    <location>
        <position position="63"/>
    </location>
    <ligand>
        <name>Zn(2+)</name>
        <dbReference type="ChEBI" id="CHEBI:29105"/>
        <label>2</label>
    </ligand>
</feature>
<feature type="binding site" evidence="1">
    <location>
        <position position="64"/>
    </location>
    <ligand>
        <name>Zn(2+)</name>
        <dbReference type="ChEBI" id="CHEBI:29105"/>
        <label>2</label>
    </ligand>
</feature>
<feature type="binding site" evidence="1">
    <location>
        <position position="80"/>
    </location>
    <ligand>
        <name>Zn(2+)</name>
        <dbReference type="ChEBI" id="CHEBI:29105"/>
        <label>2</label>
    </ligand>
</feature>
<feature type="binding site" evidence="1">
    <location>
        <position position="85"/>
    </location>
    <ligand>
        <name>Zn(2+)</name>
        <dbReference type="ChEBI" id="CHEBI:29105"/>
        <label>1</label>
    </ligand>
</feature>
<feature type="binding site" evidence="1">
    <location>
        <position position="169"/>
    </location>
    <ligand>
        <name>Zn(2+)</name>
        <dbReference type="ChEBI" id="CHEBI:29105"/>
        <label>3</label>
    </ligand>
</feature>
<feature type="binding site" evidence="1">
    <location>
        <position position="174"/>
    </location>
    <ligand>
        <name>Zn(2+)</name>
        <dbReference type="ChEBI" id="CHEBI:29105"/>
        <label>3</label>
    </ligand>
</feature>
<feature type="binding site" evidence="1">
    <location>
        <position position="188"/>
    </location>
    <ligand>
        <name>Zn(2+)</name>
        <dbReference type="ChEBI" id="CHEBI:29105"/>
        <label>3</label>
    </ligand>
</feature>
<feature type="binding site" evidence="1">
    <location>
        <position position="191"/>
    </location>
    <ligand>
        <name>Zn(2+)</name>
        <dbReference type="ChEBI" id="CHEBI:29105"/>
        <label>4</label>
    </ligand>
</feature>
<feature type="binding site" evidence="1">
    <location>
        <position position="206"/>
    </location>
    <ligand>
        <name>Zn(2+)</name>
        <dbReference type="ChEBI" id="CHEBI:29105"/>
        <label>4</label>
    </ligand>
</feature>
<feature type="binding site" evidence="1">
    <location>
        <position position="207"/>
    </location>
    <ligand>
        <name>Zn(2+)</name>
        <dbReference type="ChEBI" id="CHEBI:29105"/>
        <label>4</label>
    </ligand>
</feature>
<feature type="binding site" evidence="1">
    <location>
        <position position="223"/>
    </location>
    <ligand>
        <name>Zn(2+)</name>
        <dbReference type="ChEBI" id="CHEBI:29105"/>
        <label>4</label>
    </ligand>
</feature>
<feature type="binding site" evidence="1">
    <location>
        <position position="228"/>
    </location>
    <ligand>
        <name>Zn(2+)</name>
        <dbReference type="ChEBI" id="CHEBI:29105"/>
        <label>3</label>
    </ligand>
</feature>
<reference key="1">
    <citation type="journal article" date="2005" name="Nature">
        <title>The map-based sequence of the rice genome.</title>
        <authorList>
            <consortium name="International rice genome sequencing project (IRGSP)"/>
        </authorList>
    </citation>
    <scope>NUCLEOTIDE SEQUENCE [LARGE SCALE GENOMIC DNA]</scope>
    <source>
        <strain>cv. Nipponbare</strain>
    </source>
</reference>
<reference key="2">
    <citation type="journal article" date="2013" name="Rice">
        <title>Improvement of the Oryza sativa Nipponbare reference genome using next generation sequence and optical map data.</title>
        <authorList>
            <person name="Kawahara Y."/>
            <person name="de la Bastide M."/>
            <person name="Hamilton J.P."/>
            <person name="Kanamori H."/>
            <person name="McCombie W.R."/>
            <person name="Ouyang S."/>
            <person name="Schwartz D.C."/>
            <person name="Tanaka T."/>
            <person name="Wu J."/>
            <person name="Zhou S."/>
            <person name="Childs K.L."/>
            <person name="Davidson R.M."/>
            <person name="Lin H."/>
            <person name="Quesada-Ocampo L."/>
            <person name="Vaillancourt B."/>
            <person name="Sakai H."/>
            <person name="Lee S.S."/>
            <person name="Kim J."/>
            <person name="Numa H."/>
            <person name="Itoh T."/>
            <person name="Buell C.R."/>
            <person name="Matsumoto T."/>
        </authorList>
    </citation>
    <scope>GENOME REANNOTATION</scope>
    <source>
        <strain>cv. Nipponbare</strain>
    </source>
</reference>
<reference key="3">
    <citation type="journal article" date="2007" name="Plant Cell">
        <title>RAR1 and HSP90 form a complex with Rac/Rop GTPase and function in innate-immune responses in rice.</title>
        <authorList>
            <person name="Thao N.P."/>
            <person name="Chen L."/>
            <person name="Nakashima A."/>
            <person name="Hara S."/>
            <person name="Umemura K."/>
            <person name="Takahashi A."/>
            <person name="Shirasu K."/>
            <person name="Kawasaki T."/>
            <person name="Shimamoto K."/>
        </authorList>
    </citation>
    <scope>FUNCTION</scope>
    <scope>INTERACTION WITH RAC1 AND SGT1</scope>
</reference>
<reference key="4">
    <citation type="journal article" date="2008" name="Mol. Plant Microbe Interact.">
        <title>OsRAR1 and OsSGT1 physically interact and function in rice basal disease resistance.</title>
        <authorList>
            <person name="Wang Y."/>
            <person name="Gao M."/>
            <person name="Li Q."/>
            <person name="Wang L."/>
            <person name="Wang J."/>
            <person name="Jeon J.S."/>
            <person name="Qu N."/>
            <person name="Zhang Y."/>
            <person name="He Z."/>
        </authorList>
    </citation>
    <scope>FUNCTION</scope>
    <scope>INTERACTION WITH SGT1</scope>
    <scope>SUBCELLULAR LOCATION</scope>
</reference>
<reference key="5">
    <citation type="journal article" date="2008" name="Plant Cell">
        <title>RACK1 functions in rice innate immunity by interacting with the Rac1 immune complex.</title>
        <authorList>
            <person name="Nakashima A."/>
            <person name="Chen L."/>
            <person name="Thao N.P."/>
            <person name="Fujiwara M."/>
            <person name="Wong H.L."/>
            <person name="Kuwano M."/>
            <person name="Umemura K."/>
            <person name="Shirasu K."/>
            <person name="Kawasaki T."/>
            <person name="Shimamoto K."/>
        </authorList>
    </citation>
    <scope>INTERACTION WITH RACK1A</scope>
</reference>
<comment type="function">
    <text evidence="3 4">Involved in basal disease resistance to virulent strain of bacterial blight (X.oryzae) and compatible race of rice blast fungus (M.grisea). May act as positive regulator of basal defense. Associates with HSP90 and is essential for the pathogen-associated molecular pattern (PAMP)-triggered immune responses specifically enhanced by RAC1.</text>
</comment>
<comment type="subunit">
    <text evidence="3 4 5">Interacts (via CHORD2 domain) with SGT1 (via CS domain). Interacts with RAC1 and RACK1A.</text>
</comment>
<comment type="subcellular location">
    <subcellularLocation>
        <location evidence="4">Cytoplasm</location>
    </subcellularLocation>
    <subcellularLocation>
        <location evidence="4">Nucleus</location>
    </subcellularLocation>
</comment>
<comment type="domain">
    <text>The 2 cysteine and histidine-rich (CHORD) domains bind each 2 zinc ions, and the plant-specific 20 amino acid cysteine and histidine-containing motif (CCCH motif), located between the two CHORDs, binds 1 zinc ion.</text>
</comment>
<comment type="sequence caution" evidence="6">
    <conflict type="erroneous gene model prediction">
        <sequence resource="EMBL-CDS" id="BAD27802"/>
    </conflict>
</comment>
<comment type="sequence caution" evidence="6">
    <conflict type="erroneous gene model prediction">
        <sequence resource="EMBL-CDS" id="BAD29303"/>
    </conflict>
</comment>
<keyword id="KW-0963">Cytoplasm</keyword>
<keyword id="KW-0479">Metal-binding</keyword>
<keyword id="KW-0539">Nucleus</keyword>
<keyword id="KW-0611">Plant defense</keyword>
<keyword id="KW-1185">Reference proteome</keyword>
<keyword id="KW-0677">Repeat</keyword>
<keyword id="KW-0862">Zinc</keyword>
<evidence type="ECO:0000255" key="1">
    <source>
        <dbReference type="PROSITE-ProRule" id="PRU00734"/>
    </source>
</evidence>
<evidence type="ECO:0000256" key="2">
    <source>
        <dbReference type="SAM" id="MobiDB-lite"/>
    </source>
</evidence>
<evidence type="ECO:0000269" key="3">
    <source>
    </source>
</evidence>
<evidence type="ECO:0000269" key="4">
    <source>
    </source>
</evidence>
<evidence type="ECO:0000269" key="5">
    <source>
    </source>
</evidence>
<evidence type="ECO:0000305" key="6"/>
<dbReference type="EMBL" id="AP004156">
    <property type="protein sequence ID" value="BAD27802.1"/>
    <property type="status" value="ALT_SEQ"/>
    <property type="molecule type" value="Genomic_DNA"/>
</dbReference>
<dbReference type="EMBL" id="AP005798">
    <property type="protein sequence ID" value="BAD29303.1"/>
    <property type="status" value="ALT_SEQ"/>
    <property type="molecule type" value="Genomic_DNA"/>
</dbReference>
<dbReference type="EMBL" id="AP014958">
    <property type="status" value="NOT_ANNOTATED_CDS"/>
    <property type="molecule type" value="Genomic_DNA"/>
</dbReference>
<dbReference type="RefSeq" id="XP_015623436.1">
    <property type="nucleotide sequence ID" value="XM_015767950.1"/>
</dbReference>
<dbReference type="SMR" id="Q6EPW7"/>
<dbReference type="FunCoup" id="Q6EPW7">
    <property type="interactions" value="2410"/>
</dbReference>
<dbReference type="STRING" id="39947.Q6EPW7"/>
<dbReference type="PaxDb" id="39947-Q6EPW7"/>
<dbReference type="eggNOG" id="KOG1667">
    <property type="taxonomic scope" value="Eukaryota"/>
</dbReference>
<dbReference type="HOGENOM" id="CLU_040079_2_0_1"/>
<dbReference type="InParanoid" id="Q6EPW7"/>
<dbReference type="OrthoDB" id="10261079at2759"/>
<dbReference type="Proteomes" id="UP000000763">
    <property type="component" value="Chromosome 2"/>
</dbReference>
<dbReference type="Proteomes" id="UP000059680">
    <property type="component" value="Chromosome 2"/>
</dbReference>
<dbReference type="GO" id="GO:0005737">
    <property type="term" value="C:cytoplasm"/>
    <property type="evidence" value="ECO:0000314"/>
    <property type="project" value="UniProtKB"/>
</dbReference>
<dbReference type="GO" id="GO:0005634">
    <property type="term" value="C:nucleus"/>
    <property type="evidence" value="ECO:0000314"/>
    <property type="project" value="UniProtKB"/>
</dbReference>
<dbReference type="GO" id="GO:0051879">
    <property type="term" value="F:Hsp90 protein binding"/>
    <property type="evidence" value="ECO:0000314"/>
    <property type="project" value="UniProtKB"/>
</dbReference>
<dbReference type="GO" id="GO:0046872">
    <property type="term" value="F:metal ion binding"/>
    <property type="evidence" value="ECO:0007669"/>
    <property type="project" value="UniProtKB-KW"/>
</dbReference>
<dbReference type="GO" id="GO:0031267">
    <property type="term" value="F:small GTPase binding"/>
    <property type="evidence" value="ECO:0000353"/>
    <property type="project" value="UniProtKB"/>
</dbReference>
<dbReference type="GO" id="GO:0042742">
    <property type="term" value="P:defense response to bacterium"/>
    <property type="evidence" value="ECO:0000315"/>
    <property type="project" value="UniProtKB"/>
</dbReference>
<dbReference type="GO" id="GO:0050832">
    <property type="term" value="P:defense response to fungus"/>
    <property type="evidence" value="ECO:0000315"/>
    <property type="project" value="UniProtKB"/>
</dbReference>
<dbReference type="FunFam" id="4.10.1130.20:FF:000003">
    <property type="entry name" value="Cysteine and histidine-rich domain-containing protein RAR1"/>
    <property type="match status" value="1"/>
</dbReference>
<dbReference type="FunFam" id="4.10.1130.20:FF:000005">
    <property type="entry name" value="Cysteine and histidine-rich domain-containing protein RAR1"/>
    <property type="match status" value="1"/>
</dbReference>
<dbReference type="Gene3D" id="4.10.1130.20">
    <property type="match status" value="2"/>
</dbReference>
<dbReference type="InterPro" id="IPR007051">
    <property type="entry name" value="CHORD_dom"/>
</dbReference>
<dbReference type="InterPro" id="IPR043316">
    <property type="entry name" value="RAR1"/>
</dbReference>
<dbReference type="PANTHER" id="PTHR47895">
    <property type="entry name" value="CYSTEINE AND HISTIDINE-RICH DOMAIN-CONTAINING PROTEIN RAR1"/>
    <property type="match status" value="1"/>
</dbReference>
<dbReference type="PANTHER" id="PTHR47895:SF2">
    <property type="entry name" value="CYSTEINE AND HISTIDINE-RICH DOMAIN-CONTAINING PROTEIN RAR1"/>
    <property type="match status" value="1"/>
</dbReference>
<dbReference type="Pfam" id="PF04968">
    <property type="entry name" value="CHORD"/>
    <property type="match status" value="2"/>
</dbReference>
<dbReference type="PROSITE" id="PS51401">
    <property type="entry name" value="CHORD"/>
    <property type="match status" value="2"/>
</dbReference>
<gene>
    <name type="primary">RAR1</name>
    <name type="ordered locus">Os02g0535400</name>
    <name type="ordered locus">LOC_Os02g33180</name>
    <name type="ORF">B1136H02.25</name>
    <name type="ORF">OJ1112_G07.12</name>
</gene>
<accession>Q6EPW7</accession>
<name>RAR1_ORYSJ</name>
<organism>
    <name type="scientific">Oryza sativa subsp. japonica</name>
    <name type="common">Rice</name>
    <dbReference type="NCBI Taxonomy" id="39947"/>
    <lineage>
        <taxon>Eukaryota</taxon>
        <taxon>Viridiplantae</taxon>
        <taxon>Streptophyta</taxon>
        <taxon>Embryophyta</taxon>
        <taxon>Tracheophyta</taxon>
        <taxon>Spermatophyta</taxon>
        <taxon>Magnoliopsida</taxon>
        <taxon>Liliopsida</taxon>
        <taxon>Poales</taxon>
        <taxon>Poaceae</taxon>
        <taxon>BOP clade</taxon>
        <taxon>Oryzoideae</taxon>
        <taxon>Oryzeae</taxon>
        <taxon>Oryzinae</taxon>
        <taxon>Oryza</taxon>
        <taxon>Oryza sativa</taxon>
    </lineage>
</organism>
<sequence>MSTEAETTSAAAPAPAPAPASAPARCQRIGCDATFTDDNNPDGSCQYHPSGPMFHDGMKQWSCCKQKSHDFSLFLAIPGCKTGKHTTEKPITKAVPTKPSKAVPVQTSKQSVGADTCSRCRQGFFCSDHGSQPKAQIPTATSDTNMVPVEKPAVPPPKKKIDLNEPRVCKNKGCGKTYKEKDNHDEACDYHPGPAVFRDRIRGWKCCDIHVKEFDEFMEIPPCTKGWHNADAA</sequence>